<dbReference type="EC" id="2.5.1.75" evidence="1"/>
<dbReference type="EMBL" id="CP001131">
    <property type="protein sequence ID" value="ACG73582.1"/>
    <property type="molecule type" value="Genomic_DNA"/>
</dbReference>
<dbReference type="RefSeq" id="WP_012526372.1">
    <property type="nucleotide sequence ID" value="NC_011145.1"/>
</dbReference>
<dbReference type="SMR" id="B4UEL1"/>
<dbReference type="KEGG" id="ank:AnaeK_2355"/>
<dbReference type="HOGENOM" id="CLU_032616_0_1_7"/>
<dbReference type="OrthoDB" id="9776390at2"/>
<dbReference type="Proteomes" id="UP000001871">
    <property type="component" value="Chromosome"/>
</dbReference>
<dbReference type="GO" id="GO:0005524">
    <property type="term" value="F:ATP binding"/>
    <property type="evidence" value="ECO:0007669"/>
    <property type="project" value="UniProtKB-UniRule"/>
</dbReference>
<dbReference type="GO" id="GO:0052381">
    <property type="term" value="F:tRNA dimethylallyltransferase activity"/>
    <property type="evidence" value="ECO:0007669"/>
    <property type="project" value="UniProtKB-UniRule"/>
</dbReference>
<dbReference type="GO" id="GO:0006400">
    <property type="term" value="P:tRNA modification"/>
    <property type="evidence" value="ECO:0007669"/>
    <property type="project" value="TreeGrafter"/>
</dbReference>
<dbReference type="Gene3D" id="1.10.20.140">
    <property type="match status" value="1"/>
</dbReference>
<dbReference type="Gene3D" id="3.40.50.300">
    <property type="entry name" value="P-loop containing nucleotide triphosphate hydrolases"/>
    <property type="match status" value="1"/>
</dbReference>
<dbReference type="HAMAP" id="MF_00185">
    <property type="entry name" value="IPP_trans"/>
    <property type="match status" value="1"/>
</dbReference>
<dbReference type="InterPro" id="IPR039657">
    <property type="entry name" value="Dimethylallyltransferase"/>
</dbReference>
<dbReference type="InterPro" id="IPR018022">
    <property type="entry name" value="IPT"/>
</dbReference>
<dbReference type="InterPro" id="IPR027417">
    <property type="entry name" value="P-loop_NTPase"/>
</dbReference>
<dbReference type="NCBIfam" id="TIGR00174">
    <property type="entry name" value="miaA"/>
    <property type="match status" value="1"/>
</dbReference>
<dbReference type="PANTHER" id="PTHR11088">
    <property type="entry name" value="TRNA DIMETHYLALLYLTRANSFERASE"/>
    <property type="match status" value="1"/>
</dbReference>
<dbReference type="PANTHER" id="PTHR11088:SF60">
    <property type="entry name" value="TRNA DIMETHYLALLYLTRANSFERASE"/>
    <property type="match status" value="1"/>
</dbReference>
<dbReference type="Pfam" id="PF01715">
    <property type="entry name" value="IPPT"/>
    <property type="match status" value="1"/>
</dbReference>
<dbReference type="SUPFAM" id="SSF52540">
    <property type="entry name" value="P-loop containing nucleoside triphosphate hydrolases"/>
    <property type="match status" value="2"/>
</dbReference>
<gene>
    <name evidence="1" type="primary">miaA</name>
    <name type="ordered locus">AnaeK_2355</name>
</gene>
<name>MIAA_ANASK</name>
<keyword id="KW-0067">ATP-binding</keyword>
<keyword id="KW-0460">Magnesium</keyword>
<keyword id="KW-0547">Nucleotide-binding</keyword>
<keyword id="KW-0808">Transferase</keyword>
<keyword id="KW-0819">tRNA processing</keyword>
<sequence>MRLVVVAGPTASGKTALAIALARRLGGEIVNADSQQVYRGLDVGTAKPTAEERAAAPHHLLDLVEPGEGMDAARFAALADAAIAGIAARGRVPIVAGGTGLYVRALLHGVVEAPGRDPALRAALEEEAARLGRPAVHARLAAVDPAAAALIRPNDLVRVVRALEIAAGGRTPSELYRAHAFREDRYDAALLALDPPRAELHARIDARVRAMFAGGLLDEARALEARFDGALPARLPIGYAEAAAHLRGELDLEEAIRRVQVAHRRYARRQVIWLRKERGVAWIAPPHDVEALARRVLEPRPPAIR</sequence>
<accession>B4UEL1</accession>
<protein>
    <recommendedName>
        <fullName evidence="1">tRNA dimethylallyltransferase</fullName>
        <ecNumber evidence="1">2.5.1.75</ecNumber>
    </recommendedName>
    <alternativeName>
        <fullName evidence="1">Dimethylallyl diphosphate:tRNA dimethylallyltransferase</fullName>
        <shortName evidence="1">DMAPP:tRNA dimethylallyltransferase</shortName>
        <shortName evidence="1">DMATase</shortName>
    </alternativeName>
    <alternativeName>
        <fullName evidence="1">Isopentenyl-diphosphate:tRNA isopentenyltransferase</fullName>
        <shortName evidence="1">IPP transferase</shortName>
        <shortName evidence="1">IPPT</shortName>
        <shortName evidence="1">IPTase</shortName>
    </alternativeName>
</protein>
<evidence type="ECO:0000255" key="1">
    <source>
        <dbReference type="HAMAP-Rule" id="MF_00185"/>
    </source>
</evidence>
<proteinExistence type="inferred from homology"/>
<feature type="chain" id="PRO_0000377063" description="tRNA dimethylallyltransferase">
    <location>
        <begin position="1"/>
        <end position="305"/>
    </location>
</feature>
<feature type="region of interest" description="Interaction with substrate tRNA" evidence="1">
    <location>
        <begin position="33"/>
        <end position="36"/>
    </location>
</feature>
<feature type="binding site" evidence="1">
    <location>
        <begin position="8"/>
        <end position="15"/>
    </location>
    <ligand>
        <name>ATP</name>
        <dbReference type="ChEBI" id="CHEBI:30616"/>
    </ligand>
</feature>
<feature type="binding site" evidence="1">
    <location>
        <begin position="10"/>
        <end position="15"/>
    </location>
    <ligand>
        <name>substrate</name>
    </ligand>
</feature>
<feature type="site" description="Interaction with substrate tRNA" evidence="1">
    <location>
        <position position="99"/>
    </location>
</feature>
<feature type="site" description="Interaction with substrate tRNA" evidence="1">
    <location>
        <position position="121"/>
    </location>
</feature>
<organism>
    <name type="scientific">Anaeromyxobacter sp. (strain K)</name>
    <dbReference type="NCBI Taxonomy" id="447217"/>
    <lineage>
        <taxon>Bacteria</taxon>
        <taxon>Pseudomonadati</taxon>
        <taxon>Myxococcota</taxon>
        <taxon>Myxococcia</taxon>
        <taxon>Myxococcales</taxon>
        <taxon>Cystobacterineae</taxon>
        <taxon>Anaeromyxobacteraceae</taxon>
        <taxon>Anaeromyxobacter</taxon>
    </lineage>
</organism>
<reference key="1">
    <citation type="submission" date="2008-08" db="EMBL/GenBank/DDBJ databases">
        <title>Complete sequence of Anaeromyxobacter sp. K.</title>
        <authorList>
            <consortium name="US DOE Joint Genome Institute"/>
            <person name="Lucas S."/>
            <person name="Copeland A."/>
            <person name="Lapidus A."/>
            <person name="Glavina del Rio T."/>
            <person name="Dalin E."/>
            <person name="Tice H."/>
            <person name="Bruce D."/>
            <person name="Goodwin L."/>
            <person name="Pitluck S."/>
            <person name="Saunders E."/>
            <person name="Brettin T."/>
            <person name="Detter J.C."/>
            <person name="Han C."/>
            <person name="Larimer F."/>
            <person name="Land M."/>
            <person name="Hauser L."/>
            <person name="Kyrpides N."/>
            <person name="Ovchinnikiva G."/>
            <person name="Beliaev A."/>
        </authorList>
    </citation>
    <scope>NUCLEOTIDE SEQUENCE [LARGE SCALE GENOMIC DNA]</scope>
    <source>
        <strain>K</strain>
    </source>
</reference>
<comment type="function">
    <text evidence="1">Catalyzes the transfer of a dimethylallyl group onto the adenine at position 37 in tRNAs that read codons beginning with uridine, leading to the formation of N6-(dimethylallyl)adenosine (i(6)A).</text>
</comment>
<comment type="catalytic activity">
    <reaction evidence="1">
        <text>adenosine(37) in tRNA + dimethylallyl diphosphate = N(6)-dimethylallyladenosine(37) in tRNA + diphosphate</text>
        <dbReference type="Rhea" id="RHEA:26482"/>
        <dbReference type="Rhea" id="RHEA-COMP:10162"/>
        <dbReference type="Rhea" id="RHEA-COMP:10375"/>
        <dbReference type="ChEBI" id="CHEBI:33019"/>
        <dbReference type="ChEBI" id="CHEBI:57623"/>
        <dbReference type="ChEBI" id="CHEBI:74411"/>
        <dbReference type="ChEBI" id="CHEBI:74415"/>
        <dbReference type="EC" id="2.5.1.75"/>
    </reaction>
</comment>
<comment type="cofactor">
    <cofactor evidence="1">
        <name>Mg(2+)</name>
        <dbReference type="ChEBI" id="CHEBI:18420"/>
    </cofactor>
</comment>
<comment type="subunit">
    <text evidence="1">Monomer.</text>
</comment>
<comment type="similarity">
    <text evidence="1">Belongs to the IPP transferase family.</text>
</comment>